<protein>
    <recommendedName>
        <fullName evidence="2">Purine nucleoside phosphorylase DeoD-type</fullName>
        <shortName evidence="2">PNP</shortName>
        <ecNumber evidence="2">2.4.2.1</ecNumber>
    </recommendedName>
</protein>
<proteinExistence type="inferred from homology"/>
<evidence type="ECO:0000250" key="1">
    <source>
        <dbReference type="UniProtKB" id="P50389"/>
    </source>
</evidence>
<evidence type="ECO:0000255" key="2">
    <source>
        <dbReference type="HAMAP-Rule" id="MF_01627"/>
    </source>
</evidence>
<organism>
    <name type="scientific">Shewanella baltica (strain OS223)</name>
    <dbReference type="NCBI Taxonomy" id="407976"/>
    <lineage>
        <taxon>Bacteria</taxon>
        <taxon>Pseudomonadati</taxon>
        <taxon>Pseudomonadota</taxon>
        <taxon>Gammaproteobacteria</taxon>
        <taxon>Alteromonadales</taxon>
        <taxon>Shewanellaceae</taxon>
        <taxon>Shewanella</taxon>
    </lineage>
</organism>
<name>DEOD_SHEB2</name>
<reference key="1">
    <citation type="submission" date="2008-12" db="EMBL/GenBank/DDBJ databases">
        <title>Complete sequence of chromosome of Shewanella baltica OS223.</title>
        <authorList>
            <consortium name="US DOE Joint Genome Institute"/>
            <person name="Lucas S."/>
            <person name="Copeland A."/>
            <person name="Lapidus A."/>
            <person name="Glavina del Rio T."/>
            <person name="Dalin E."/>
            <person name="Tice H."/>
            <person name="Bruce D."/>
            <person name="Goodwin L."/>
            <person name="Pitluck S."/>
            <person name="Chertkov O."/>
            <person name="Meincke L."/>
            <person name="Brettin T."/>
            <person name="Detter J.C."/>
            <person name="Han C."/>
            <person name="Kuske C.R."/>
            <person name="Larimer F."/>
            <person name="Land M."/>
            <person name="Hauser L."/>
            <person name="Kyrpides N."/>
            <person name="Ovchinnikova G."/>
            <person name="Brettar I."/>
            <person name="Rodrigues J."/>
            <person name="Konstantinidis K."/>
            <person name="Tiedje J."/>
        </authorList>
    </citation>
    <scope>NUCLEOTIDE SEQUENCE [LARGE SCALE GENOMIC DNA]</scope>
    <source>
        <strain>OS223</strain>
    </source>
</reference>
<gene>
    <name evidence="2" type="primary">deoD</name>
    <name type="ordered locus">Sbal223_1143</name>
</gene>
<accession>B8E6P7</accession>
<comment type="function">
    <text evidence="2">Catalyzes the reversible phosphorolytic breakdown of the N-glycosidic bond in the beta-(deoxy)ribonucleoside molecules, with the formation of the corresponding free purine bases and pentose-1-phosphate.</text>
</comment>
<comment type="catalytic activity">
    <reaction evidence="2">
        <text>a purine D-ribonucleoside + phosphate = a purine nucleobase + alpha-D-ribose 1-phosphate</text>
        <dbReference type="Rhea" id="RHEA:19805"/>
        <dbReference type="ChEBI" id="CHEBI:26386"/>
        <dbReference type="ChEBI" id="CHEBI:43474"/>
        <dbReference type="ChEBI" id="CHEBI:57720"/>
        <dbReference type="ChEBI" id="CHEBI:142355"/>
        <dbReference type="EC" id="2.4.2.1"/>
    </reaction>
</comment>
<comment type="catalytic activity">
    <reaction evidence="2">
        <text>a purine 2'-deoxy-D-ribonucleoside + phosphate = a purine nucleobase + 2-deoxy-alpha-D-ribose 1-phosphate</text>
        <dbReference type="Rhea" id="RHEA:36431"/>
        <dbReference type="ChEBI" id="CHEBI:26386"/>
        <dbReference type="ChEBI" id="CHEBI:43474"/>
        <dbReference type="ChEBI" id="CHEBI:57259"/>
        <dbReference type="ChEBI" id="CHEBI:142361"/>
        <dbReference type="EC" id="2.4.2.1"/>
    </reaction>
</comment>
<comment type="subunit">
    <text evidence="2">Homohexamer; trimer of homodimers.</text>
</comment>
<comment type="similarity">
    <text evidence="2">Belongs to the PNP/UDP phosphorylase family.</text>
</comment>
<keyword id="KW-0328">Glycosyltransferase</keyword>
<keyword id="KW-0808">Transferase</keyword>
<sequence length="236" mass="25646">MATPHINAVEGAFAETMLFPGDPLRAKYIAETFLENVEQVTDVRNMLGFTGTYKGKRISVMGSGMGIPSCSIYATELIRDYGVKNLIRVGTCGAISTDVKVRDVIIGMGACTDSAVNRLRFKGQDFAAIANYELMNAVIESAKVRGTKIRVGNIFSADLFYTPDPQMFDVMEKMGVLGVEMEAAGLYGVAHEFGARALCVVTVSDHIRTGEKTSAEERQTTFNDMIIMTLEAAITL</sequence>
<dbReference type="EC" id="2.4.2.1" evidence="2"/>
<dbReference type="EMBL" id="CP001252">
    <property type="protein sequence ID" value="ACK45658.1"/>
    <property type="molecule type" value="Genomic_DNA"/>
</dbReference>
<dbReference type="RefSeq" id="WP_006082701.1">
    <property type="nucleotide sequence ID" value="NC_011663.1"/>
</dbReference>
<dbReference type="SMR" id="B8E6P7"/>
<dbReference type="KEGG" id="sbp:Sbal223_1143"/>
<dbReference type="HOGENOM" id="CLU_068457_2_0_6"/>
<dbReference type="Proteomes" id="UP000002507">
    <property type="component" value="Chromosome"/>
</dbReference>
<dbReference type="GO" id="GO:0005829">
    <property type="term" value="C:cytosol"/>
    <property type="evidence" value="ECO:0007669"/>
    <property type="project" value="TreeGrafter"/>
</dbReference>
<dbReference type="GO" id="GO:0004731">
    <property type="term" value="F:purine-nucleoside phosphorylase activity"/>
    <property type="evidence" value="ECO:0007669"/>
    <property type="project" value="UniProtKB-UniRule"/>
</dbReference>
<dbReference type="GO" id="GO:0006152">
    <property type="term" value="P:purine nucleoside catabolic process"/>
    <property type="evidence" value="ECO:0007669"/>
    <property type="project" value="TreeGrafter"/>
</dbReference>
<dbReference type="CDD" id="cd09006">
    <property type="entry name" value="PNP_EcPNPI-like"/>
    <property type="match status" value="1"/>
</dbReference>
<dbReference type="Gene3D" id="3.40.50.1580">
    <property type="entry name" value="Nucleoside phosphorylase domain"/>
    <property type="match status" value="1"/>
</dbReference>
<dbReference type="HAMAP" id="MF_01627">
    <property type="entry name" value="Pur_nucleosid_phosp"/>
    <property type="match status" value="1"/>
</dbReference>
<dbReference type="InterPro" id="IPR004402">
    <property type="entry name" value="DeoD-type"/>
</dbReference>
<dbReference type="InterPro" id="IPR018016">
    <property type="entry name" value="Nucleoside_phosphorylase_CS"/>
</dbReference>
<dbReference type="InterPro" id="IPR000845">
    <property type="entry name" value="Nucleoside_phosphorylase_d"/>
</dbReference>
<dbReference type="InterPro" id="IPR035994">
    <property type="entry name" value="Nucleoside_phosphorylase_sf"/>
</dbReference>
<dbReference type="NCBIfam" id="TIGR00107">
    <property type="entry name" value="deoD"/>
    <property type="match status" value="1"/>
</dbReference>
<dbReference type="NCBIfam" id="NF004489">
    <property type="entry name" value="PRK05819.1"/>
    <property type="match status" value="1"/>
</dbReference>
<dbReference type="NCBIfam" id="NF009914">
    <property type="entry name" value="PRK13374.1"/>
    <property type="match status" value="1"/>
</dbReference>
<dbReference type="PANTHER" id="PTHR43691:SF2">
    <property type="entry name" value="PURINE NUCLEOSIDE PHOSPHORYLASE DEOD-TYPE"/>
    <property type="match status" value="1"/>
</dbReference>
<dbReference type="PANTHER" id="PTHR43691">
    <property type="entry name" value="URIDINE PHOSPHORYLASE"/>
    <property type="match status" value="1"/>
</dbReference>
<dbReference type="Pfam" id="PF01048">
    <property type="entry name" value="PNP_UDP_1"/>
    <property type="match status" value="1"/>
</dbReference>
<dbReference type="SUPFAM" id="SSF53167">
    <property type="entry name" value="Purine and uridine phosphorylases"/>
    <property type="match status" value="1"/>
</dbReference>
<dbReference type="PROSITE" id="PS01232">
    <property type="entry name" value="PNP_UDP_1"/>
    <property type="match status" value="1"/>
</dbReference>
<feature type="chain" id="PRO_1000186222" description="Purine nucleoside phosphorylase DeoD-type">
    <location>
        <begin position="1"/>
        <end position="236"/>
    </location>
</feature>
<feature type="active site" description="Proton donor" evidence="2">
    <location>
        <position position="205"/>
    </location>
</feature>
<feature type="binding site" evidence="1">
    <location>
        <position position="5"/>
    </location>
    <ligand>
        <name>a purine D-ribonucleoside</name>
        <dbReference type="ChEBI" id="CHEBI:142355"/>
        <note>ligand shared between dimeric partners</note>
    </ligand>
</feature>
<feature type="binding site" description="in other chain" evidence="1">
    <location>
        <position position="21"/>
    </location>
    <ligand>
        <name>phosphate</name>
        <dbReference type="ChEBI" id="CHEBI:43474"/>
        <note>ligand shared between dimeric partners</note>
    </ligand>
</feature>
<feature type="binding site" description="in other chain" evidence="1">
    <location>
        <position position="25"/>
    </location>
    <ligand>
        <name>phosphate</name>
        <dbReference type="ChEBI" id="CHEBI:43474"/>
        <note>ligand shared between dimeric partners</note>
    </ligand>
</feature>
<feature type="binding site" evidence="1">
    <location>
        <position position="44"/>
    </location>
    <ligand>
        <name>phosphate</name>
        <dbReference type="ChEBI" id="CHEBI:43474"/>
        <note>ligand shared between dimeric partners</note>
    </ligand>
</feature>
<feature type="binding site" description="in other chain" evidence="1">
    <location>
        <begin position="88"/>
        <end position="91"/>
    </location>
    <ligand>
        <name>phosphate</name>
        <dbReference type="ChEBI" id="CHEBI:43474"/>
        <note>ligand shared between dimeric partners</note>
    </ligand>
</feature>
<feature type="binding site" description="in other chain" evidence="1">
    <location>
        <begin position="180"/>
        <end position="182"/>
    </location>
    <ligand>
        <name>a purine D-ribonucleoside</name>
        <dbReference type="ChEBI" id="CHEBI:142355"/>
        <note>ligand shared between dimeric partners</note>
    </ligand>
</feature>
<feature type="binding site" description="in other chain" evidence="1">
    <location>
        <begin position="204"/>
        <end position="205"/>
    </location>
    <ligand>
        <name>a purine D-ribonucleoside</name>
        <dbReference type="ChEBI" id="CHEBI:142355"/>
        <note>ligand shared between dimeric partners</note>
    </ligand>
</feature>
<feature type="site" description="Important for catalytic activity" evidence="2">
    <location>
        <position position="218"/>
    </location>
</feature>